<geneLocation type="chloroplast"/>
<keyword id="KW-0150">Chloroplast</keyword>
<keyword id="KW-0251">Elongation factor</keyword>
<keyword id="KW-0342">GTP-binding</keyword>
<keyword id="KW-0378">Hydrolase</keyword>
<keyword id="KW-0460">Magnesium</keyword>
<keyword id="KW-0479">Metal-binding</keyword>
<keyword id="KW-0547">Nucleotide-binding</keyword>
<keyword id="KW-0934">Plastid</keyword>
<keyword id="KW-0648">Protein biosynthesis</keyword>
<organism>
    <name type="scientific">Stephanocyclus meneghinianus</name>
    <name type="common">Diatom</name>
    <name type="synonym">Cyclotella meneghiniana</name>
    <dbReference type="NCBI Taxonomy" id="29205"/>
    <lineage>
        <taxon>Eukaryota</taxon>
        <taxon>Sar</taxon>
        <taxon>Stramenopiles</taxon>
        <taxon>Ochrophyta</taxon>
        <taxon>Bacillariophyta</taxon>
        <taxon>Coscinodiscophyceae</taxon>
        <taxon>Thalassiosirophycidae</taxon>
        <taxon>Thalassiosirales</taxon>
        <taxon>Thalassiosiraceae</taxon>
        <taxon>Stephanocyclus</taxon>
    </lineage>
</organism>
<accession>P50373</accession>
<sequence>MGPEKFARAKPHINIGTIGHVDHGKTTFTAAITATLANDGESFAKAYSDIDGAPEERARGITINTAHVEYQTRDRHYAHVDCPGHADYVKNMITGAAQMDGAILVVSAADGPMPQTREHILLAKQVGVPHIVVFLNKQDQVDDDELLELVELEVRELLSTYDFPGDDIPICPGSRLQAIEAISSNPTLKRGDNPWVDKIYALMDAVDAYIPTPERDVEKTFLMAIEDVFSITGRGTVATGRIERGVIKVVDNVEIVGIGDTKTTTITGIEMFQKTLEEGFAGDNVGILLRGVTRENIERGMVLAKPGTITPHTNFESEVYVLTKEEGGRHTPFFTGYSPIFYVITTDVTGSIDQFTADDGSIVEMVMPGDRIKMTAELIYPVAIEEGMRFVIREGGRTIGAGVVSKIVK</sequence>
<reference key="1">
    <citation type="journal article" date="1995" name="Mol. Phylogenet. Evol.">
        <title>Phylogenetic analysis of tufA sequences indicates a cyanobacterial origin of all plastids.</title>
        <authorList>
            <person name="Delwiche C.F."/>
            <person name="Kuhsel M."/>
            <person name="Palmer J.D."/>
        </authorList>
    </citation>
    <scope>NUCLEOTIDE SEQUENCE [GENOMIC DNA]</scope>
</reference>
<protein>
    <recommendedName>
        <fullName>Elongation factor Tu, chloroplastic</fullName>
        <shortName>EF-Tu</shortName>
        <ecNumber evidence="2">3.6.5.3</ecNumber>
    </recommendedName>
</protein>
<proteinExistence type="inferred from homology"/>
<feature type="chain" id="PRO_0000091456" description="Elongation factor Tu, chloroplastic">
    <location>
        <begin position="1"/>
        <end position="409"/>
    </location>
</feature>
<feature type="domain" description="tr-type G">
    <location>
        <begin position="10"/>
        <end position="214"/>
    </location>
</feature>
<feature type="region of interest" description="G1" evidence="1">
    <location>
        <begin position="19"/>
        <end position="26"/>
    </location>
</feature>
<feature type="region of interest" description="G2" evidence="1">
    <location>
        <begin position="60"/>
        <end position="64"/>
    </location>
</feature>
<feature type="region of interest" description="G3" evidence="1">
    <location>
        <begin position="81"/>
        <end position="84"/>
    </location>
</feature>
<feature type="region of interest" description="G4" evidence="1">
    <location>
        <begin position="136"/>
        <end position="139"/>
    </location>
</feature>
<feature type="region of interest" description="G5" evidence="1">
    <location>
        <begin position="174"/>
        <end position="176"/>
    </location>
</feature>
<feature type="binding site" evidence="1">
    <location>
        <begin position="19"/>
        <end position="26"/>
    </location>
    <ligand>
        <name>GTP</name>
        <dbReference type="ChEBI" id="CHEBI:37565"/>
    </ligand>
</feature>
<feature type="binding site" evidence="2">
    <location>
        <position position="26"/>
    </location>
    <ligand>
        <name>Mg(2+)</name>
        <dbReference type="ChEBI" id="CHEBI:18420"/>
    </ligand>
</feature>
<feature type="binding site" evidence="1">
    <location>
        <begin position="81"/>
        <end position="85"/>
    </location>
    <ligand>
        <name>GTP</name>
        <dbReference type="ChEBI" id="CHEBI:37565"/>
    </ligand>
</feature>
<feature type="binding site" evidence="1">
    <location>
        <begin position="136"/>
        <end position="139"/>
    </location>
    <ligand>
        <name>GTP</name>
        <dbReference type="ChEBI" id="CHEBI:37565"/>
    </ligand>
</feature>
<evidence type="ECO:0000250" key="1"/>
<evidence type="ECO:0000255" key="2">
    <source>
        <dbReference type="HAMAP-Rule" id="MF_00118"/>
    </source>
</evidence>
<evidence type="ECO:0000305" key="3"/>
<name>EFTU_STEMN</name>
<gene>
    <name type="primary">tufA</name>
</gene>
<dbReference type="EC" id="3.6.5.3" evidence="2"/>
<dbReference type="EMBL" id="U09430">
    <property type="protein sequence ID" value="AAA87688.1"/>
    <property type="molecule type" value="Genomic_DNA"/>
</dbReference>
<dbReference type="SMR" id="P50373"/>
<dbReference type="GO" id="GO:0009507">
    <property type="term" value="C:chloroplast"/>
    <property type="evidence" value="ECO:0007669"/>
    <property type="project" value="UniProtKB-SubCell"/>
</dbReference>
<dbReference type="GO" id="GO:0005829">
    <property type="term" value="C:cytosol"/>
    <property type="evidence" value="ECO:0007669"/>
    <property type="project" value="TreeGrafter"/>
</dbReference>
<dbReference type="GO" id="GO:0005525">
    <property type="term" value="F:GTP binding"/>
    <property type="evidence" value="ECO:0007669"/>
    <property type="project" value="UniProtKB-UniRule"/>
</dbReference>
<dbReference type="GO" id="GO:0003924">
    <property type="term" value="F:GTPase activity"/>
    <property type="evidence" value="ECO:0007669"/>
    <property type="project" value="InterPro"/>
</dbReference>
<dbReference type="GO" id="GO:0003746">
    <property type="term" value="F:translation elongation factor activity"/>
    <property type="evidence" value="ECO:0007669"/>
    <property type="project" value="UniProtKB-UniRule"/>
</dbReference>
<dbReference type="CDD" id="cd03697">
    <property type="entry name" value="EFTU_II"/>
    <property type="match status" value="1"/>
</dbReference>
<dbReference type="CDD" id="cd03707">
    <property type="entry name" value="EFTU_III"/>
    <property type="match status" value="1"/>
</dbReference>
<dbReference type="FunFam" id="2.40.30.10:FF:000001">
    <property type="entry name" value="Elongation factor Tu"/>
    <property type="match status" value="1"/>
</dbReference>
<dbReference type="FunFam" id="3.40.50.300:FF:000003">
    <property type="entry name" value="Elongation factor Tu"/>
    <property type="match status" value="1"/>
</dbReference>
<dbReference type="Gene3D" id="3.40.50.300">
    <property type="entry name" value="P-loop containing nucleotide triphosphate hydrolases"/>
    <property type="match status" value="1"/>
</dbReference>
<dbReference type="Gene3D" id="2.40.30.10">
    <property type="entry name" value="Translation factors"/>
    <property type="match status" value="2"/>
</dbReference>
<dbReference type="HAMAP" id="MF_00118_B">
    <property type="entry name" value="EF_Tu_B"/>
    <property type="match status" value="1"/>
</dbReference>
<dbReference type="InterPro" id="IPR050055">
    <property type="entry name" value="EF-Tu_GTPase"/>
</dbReference>
<dbReference type="InterPro" id="IPR004161">
    <property type="entry name" value="EFTu-like_2"/>
</dbReference>
<dbReference type="InterPro" id="IPR033720">
    <property type="entry name" value="EFTU_2"/>
</dbReference>
<dbReference type="InterPro" id="IPR031157">
    <property type="entry name" value="G_TR_CS"/>
</dbReference>
<dbReference type="InterPro" id="IPR027417">
    <property type="entry name" value="P-loop_NTPase"/>
</dbReference>
<dbReference type="InterPro" id="IPR005225">
    <property type="entry name" value="Small_GTP-bd"/>
</dbReference>
<dbReference type="InterPro" id="IPR000795">
    <property type="entry name" value="T_Tr_GTP-bd_dom"/>
</dbReference>
<dbReference type="InterPro" id="IPR009000">
    <property type="entry name" value="Transl_B-barrel_sf"/>
</dbReference>
<dbReference type="InterPro" id="IPR009001">
    <property type="entry name" value="Transl_elong_EF1A/Init_IF2_C"/>
</dbReference>
<dbReference type="InterPro" id="IPR004541">
    <property type="entry name" value="Transl_elong_EFTu/EF1A_bac/org"/>
</dbReference>
<dbReference type="InterPro" id="IPR004160">
    <property type="entry name" value="Transl_elong_EFTu/EF1A_C"/>
</dbReference>
<dbReference type="NCBIfam" id="TIGR00485">
    <property type="entry name" value="EF-Tu"/>
    <property type="match status" value="1"/>
</dbReference>
<dbReference type="NCBIfam" id="NF000766">
    <property type="entry name" value="PRK00049.1"/>
    <property type="match status" value="1"/>
</dbReference>
<dbReference type="NCBIfam" id="NF009372">
    <property type="entry name" value="PRK12735.1"/>
    <property type="match status" value="1"/>
</dbReference>
<dbReference type="NCBIfam" id="NF009373">
    <property type="entry name" value="PRK12736.1"/>
    <property type="match status" value="1"/>
</dbReference>
<dbReference type="NCBIfam" id="TIGR00231">
    <property type="entry name" value="small_GTP"/>
    <property type="match status" value="1"/>
</dbReference>
<dbReference type="PANTHER" id="PTHR43721:SF22">
    <property type="entry name" value="ELONGATION FACTOR TU, MITOCHONDRIAL"/>
    <property type="match status" value="1"/>
</dbReference>
<dbReference type="PANTHER" id="PTHR43721">
    <property type="entry name" value="ELONGATION FACTOR TU-RELATED"/>
    <property type="match status" value="1"/>
</dbReference>
<dbReference type="Pfam" id="PF00009">
    <property type="entry name" value="GTP_EFTU"/>
    <property type="match status" value="1"/>
</dbReference>
<dbReference type="Pfam" id="PF03144">
    <property type="entry name" value="GTP_EFTU_D2"/>
    <property type="match status" value="1"/>
</dbReference>
<dbReference type="Pfam" id="PF03143">
    <property type="entry name" value="GTP_EFTU_D3"/>
    <property type="match status" value="1"/>
</dbReference>
<dbReference type="PRINTS" id="PR00315">
    <property type="entry name" value="ELONGATNFCT"/>
</dbReference>
<dbReference type="SUPFAM" id="SSF50465">
    <property type="entry name" value="EF-Tu/eEF-1alpha/eIF2-gamma C-terminal domain"/>
    <property type="match status" value="1"/>
</dbReference>
<dbReference type="SUPFAM" id="SSF52540">
    <property type="entry name" value="P-loop containing nucleoside triphosphate hydrolases"/>
    <property type="match status" value="1"/>
</dbReference>
<dbReference type="SUPFAM" id="SSF50447">
    <property type="entry name" value="Translation proteins"/>
    <property type="match status" value="1"/>
</dbReference>
<dbReference type="PROSITE" id="PS00301">
    <property type="entry name" value="G_TR_1"/>
    <property type="match status" value="1"/>
</dbReference>
<dbReference type="PROSITE" id="PS51722">
    <property type="entry name" value="G_TR_2"/>
    <property type="match status" value="1"/>
</dbReference>
<comment type="function">
    <text evidence="2">GTP hydrolase that promotes the GTP-dependent binding of aminoacyl-tRNA to the A-site of ribosomes during protein biosynthesis.</text>
</comment>
<comment type="catalytic activity">
    <reaction evidence="2">
        <text>GTP + H2O = GDP + phosphate + H(+)</text>
        <dbReference type="Rhea" id="RHEA:19669"/>
        <dbReference type="ChEBI" id="CHEBI:15377"/>
        <dbReference type="ChEBI" id="CHEBI:15378"/>
        <dbReference type="ChEBI" id="CHEBI:37565"/>
        <dbReference type="ChEBI" id="CHEBI:43474"/>
        <dbReference type="ChEBI" id="CHEBI:58189"/>
        <dbReference type="EC" id="3.6.5.3"/>
    </reaction>
    <physiologicalReaction direction="left-to-right" evidence="2">
        <dbReference type="Rhea" id="RHEA:19670"/>
    </physiologicalReaction>
</comment>
<comment type="subcellular location">
    <subcellularLocation>
        <location>Plastid</location>
        <location>Chloroplast</location>
    </subcellularLocation>
</comment>
<comment type="similarity">
    <text evidence="3">Belongs to the TRAFAC class translation factor GTPase superfamily. Classic translation factor GTPase family. EF-Tu/EF-1A subfamily.</text>
</comment>